<organism>
    <name type="scientific">Candida glabrata (strain ATCC 2001 / BCRC 20586 / JCM 3761 / NBRC 0622 / NRRL Y-65 / CBS 138)</name>
    <name type="common">Yeast</name>
    <name type="synonym">Nakaseomyces glabratus</name>
    <dbReference type="NCBI Taxonomy" id="284593"/>
    <lineage>
        <taxon>Eukaryota</taxon>
        <taxon>Fungi</taxon>
        <taxon>Dikarya</taxon>
        <taxon>Ascomycota</taxon>
        <taxon>Saccharomycotina</taxon>
        <taxon>Saccharomycetes</taxon>
        <taxon>Saccharomycetales</taxon>
        <taxon>Saccharomycetaceae</taxon>
        <taxon>Nakaseomyces</taxon>
    </lineage>
</organism>
<feature type="chain" id="PRO_0000215925" description="Protein AF-9 homolog">
    <location>
        <begin position="1"/>
        <end position="221"/>
    </location>
</feature>
<feature type="domain" description="YEATS" evidence="2">
    <location>
        <begin position="8"/>
        <end position="169"/>
    </location>
</feature>
<keyword id="KW-0010">Activator</keyword>
<keyword id="KW-0156">Chromatin regulator</keyword>
<keyword id="KW-0963">Cytoplasm</keyword>
<keyword id="KW-0227">DNA damage</keyword>
<keyword id="KW-0234">DNA repair</keyword>
<keyword id="KW-0539">Nucleus</keyword>
<keyword id="KW-1185">Reference proteome</keyword>
<keyword id="KW-0804">Transcription</keyword>
<keyword id="KW-0805">Transcription regulation</keyword>
<evidence type="ECO:0000250" key="1"/>
<evidence type="ECO:0000255" key="2">
    <source>
        <dbReference type="PROSITE-ProRule" id="PRU00376"/>
    </source>
</evidence>
<evidence type="ECO:0000305" key="3"/>
<sequence>MAPPTSKRIKTLSVSRAVIYGNTAKKIGENRPPNAPSEHTHLWTIFVRSPTGDDISYFIKKVVFKLHETYPNPVRTIEAPPFELTETGWGEFDINIKIYFVEESNEKFINFYHRLRLHPYVNVNPPMSTEVKKEETGNATTSDEISSIFYDEIVFNEPYEDFFKILVSKPGNLLPSNKTEDCLFSRQLEQDELTRIKMASSNVDKEIEIYKKKLEDTLKSR</sequence>
<gene>
    <name type="primary">YAF9</name>
    <name type="ordered locus">CAGL0B04609g</name>
</gene>
<dbReference type="EMBL" id="CR380948">
    <property type="protein sequence ID" value="CAG58071.1"/>
    <property type="molecule type" value="Genomic_DNA"/>
</dbReference>
<dbReference type="RefSeq" id="XP_445171.1">
    <property type="nucleotide sequence ID" value="XM_445171.1"/>
</dbReference>
<dbReference type="SMR" id="Q6FXM4"/>
<dbReference type="FunCoup" id="Q6FXM4">
    <property type="interactions" value="780"/>
</dbReference>
<dbReference type="STRING" id="284593.Q6FXM4"/>
<dbReference type="EnsemblFungi" id="CAGL0B04609g-T">
    <property type="protein sequence ID" value="CAGL0B04609g-T-p1"/>
    <property type="gene ID" value="CAGL0B04609g"/>
</dbReference>
<dbReference type="KEGG" id="cgr:2886605"/>
<dbReference type="CGD" id="CAL0127134">
    <property type="gene designation" value="CAGL0B04609g"/>
</dbReference>
<dbReference type="VEuPathDB" id="FungiDB:B1J91_B04609g"/>
<dbReference type="VEuPathDB" id="FungiDB:CAGL0B04609g"/>
<dbReference type="eggNOG" id="KOG3149">
    <property type="taxonomic scope" value="Eukaryota"/>
</dbReference>
<dbReference type="HOGENOM" id="CLU_051385_2_1_1"/>
<dbReference type="InParanoid" id="Q6FXM4"/>
<dbReference type="OMA" id="VKPYHNE"/>
<dbReference type="Proteomes" id="UP000002428">
    <property type="component" value="Chromosome B"/>
</dbReference>
<dbReference type="GO" id="GO:0000781">
    <property type="term" value="C:chromosome, telomeric region"/>
    <property type="evidence" value="ECO:0007669"/>
    <property type="project" value="GOC"/>
</dbReference>
<dbReference type="GO" id="GO:0005737">
    <property type="term" value="C:cytoplasm"/>
    <property type="evidence" value="ECO:0007669"/>
    <property type="project" value="UniProtKB-SubCell"/>
</dbReference>
<dbReference type="GO" id="GO:0035267">
    <property type="term" value="C:NuA4 histone acetyltransferase complex"/>
    <property type="evidence" value="ECO:0007669"/>
    <property type="project" value="EnsemblFungi"/>
</dbReference>
<dbReference type="GO" id="GO:0000812">
    <property type="term" value="C:Swr1 complex"/>
    <property type="evidence" value="ECO:0007669"/>
    <property type="project" value="EnsemblFungi"/>
</dbReference>
<dbReference type="GO" id="GO:0006281">
    <property type="term" value="P:DNA repair"/>
    <property type="evidence" value="ECO:0007669"/>
    <property type="project" value="UniProtKB-KW"/>
</dbReference>
<dbReference type="GO" id="GO:0006355">
    <property type="term" value="P:regulation of DNA-templated transcription"/>
    <property type="evidence" value="ECO:0007669"/>
    <property type="project" value="InterPro"/>
</dbReference>
<dbReference type="GO" id="GO:0031509">
    <property type="term" value="P:subtelomeric heterochromatin formation"/>
    <property type="evidence" value="ECO:0007669"/>
    <property type="project" value="EnsemblFungi"/>
</dbReference>
<dbReference type="CDD" id="cd16908">
    <property type="entry name" value="YEATS_Yaf9_like"/>
    <property type="match status" value="1"/>
</dbReference>
<dbReference type="FunFam" id="2.60.40.1970:FF:000007">
    <property type="entry name" value="Protein AF-9 homolog"/>
    <property type="match status" value="1"/>
</dbReference>
<dbReference type="Gene3D" id="2.60.40.1970">
    <property type="entry name" value="YEATS domain"/>
    <property type="match status" value="1"/>
</dbReference>
<dbReference type="InterPro" id="IPR038704">
    <property type="entry name" value="YEAST_sf"/>
</dbReference>
<dbReference type="InterPro" id="IPR005033">
    <property type="entry name" value="YEATS"/>
</dbReference>
<dbReference type="InterPro" id="IPR055129">
    <property type="entry name" value="YEATS_dom"/>
</dbReference>
<dbReference type="PANTHER" id="PTHR23195">
    <property type="entry name" value="YEATS DOMAIN"/>
    <property type="match status" value="1"/>
</dbReference>
<dbReference type="Pfam" id="PF03366">
    <property type="entry name" value="YEATS"/>
    <property type="match status" value="1"/>
</dbReference>
<dbReference type="PROSITE" id="PS51037">
    <property type="entry name" value="YEATS"/>
    <property type="match status" value="1"/>
</dbReference>
<accession>Q6FXM4</accession>
<name>AF9_CANGA</name>
<reference key="1">
    <citation type="journal article" date="2004" name="Nature">
        <title>Genome evolution in yeasts.</title>
        <authorList>
            <person name="Dujon B."/>
            <person name="Sherman D."/>
            <person name="Fischer G."/>
            <person name="Durrens P."/>
            <person name="Casaregola S."/>
            <person name="Lafontaine I."/>
            <person name="de Montigny J."/>
            <person name="Marck C."/>
            <person name="Neuveglise C."/>
            <person name="Talla E."/>
            <person name="Goffard N."/>
            <person name="Frangeul L."/>
            <person name="Aigle M."/>
            <person name="Anthouard V."/>
            <person name="Babour A."/>
            <person name="Barbe V."/>
            <person name="Barnay S."/>
            <person name="Blanchin S."/>
            <person name="Beckerich J.-M."/>
            <person name="Beyne E."/>
            <person name="Bleykasten C."/>
            <person name="Boisrame A."/>
            <person name="Boyer J."/>
            <person name="Cattolico L."/>
            <person name="Confanioleri F."/>
            <person name="de Daruvar A."/>
            <person name="Despons L."/>
            <person name="Fabre E."/>
            <person name="Fairhead C."/>
            <person name="Ferry-Dumazet H."/>
            <person name="Groppi A."/>
            <person name="Hantraye F."/>
            <person name="Hennequin C."/>
            <person name="Jauniaux N."/>
            <person name="Joyet P."/>
            <person name="Kachouri R."/>
            <person name="Kerrest A."/>
            <person name="Koszul R."/>
            <person name="Lemaire M."/>
            <person name="Lesur I."/>
            <person name="Ma L."/>
            <person name="Muller H."/>
            <person name="Nicaud J.-M."/>
            <person name="Nikolski M."/>
            <person name="Oztas S."/>
            <person name="Ozier-Kalogeropoulos O."/>
            <person name="Pellenz S."/>
            <person name="Potier S."/>
            <person name="Richard G.-F."/>
            <person name="Straub M.-L."/>
            <person name="Suleau A."/>
            <person name="Swennen D."/>
            <person name="Tekaia F."/>
            <person name="Wesolowski-Louvel M."/>
            <person name="Westhof E."/>
            <person name="Wirth B."/>
            <person name="Zeniou-Meyer M."/>
            <person name="Zivanovic Y."/>
            <person name="Bolotin-Fukuhara M."/>
            <person name="Thierry A."/>
            <person name="Bouchier C."/>
            <person name="Caudron B."/>
            <person name="Scarpelli C."/>
            <person name="Gaillardin C."/>
            <person name="Weissenbach J."/>
            <person name="Wincker P."/>
            <person name="Souciet J.-L."/>
        </authorList>
    </citation>
    <scope>NUCLEOTIDE SEQUENCE [LARGE SCALE GENOMIC DNA]</scope>
    <source>
        <strain>ATCC 2001 / BCRC 20586 / JCM 3761 / NBRC 0622 / NRRL Y-65 / CBS 138</strain>
    </source>
</reference>
<protein>
    <recommendedName>
        <fullName>Protein AF-9 homolog</fullName>
    </recommendedName>
</protein>
<proteinExistence type="inferred from homology"/>
<comment type="function">
    <text evidence="1">Component of the SWR1 complex which mediates the ATP-dependent exchange of histone H2A for the H2A variant HZT1 leading to transcriptional regulation of selected genes by chromatin remodeling. Component of the NuA4 histone acetyltransferase complex which is involved in transcriptional activation of selected genes principally by acetylation of nucleosomal histones H4 and H2A. The NuA4 complex is also involved in DNA repair. Yaf9 may also be required for viability in conditions in which the structural integrity of the spindle is compromised (By similarity).</text>
</comment>
<comment type="subunit">
    <text evidence="1">Component of the SWR1 chromatin-remodeling complex and of the NuA4 histone acetyltransferase complex.</text>
</comment>
<comment type="subcellular location">
    <subcellularLocation>
        <location evidence="1">Cytoplasm</location>
    </subcellularLocation>
    <subcellularLocation>
        <location evidence="2">Nucleus</location>
    </subcellularLocation>
</comment>
<comment type="similarity">
    <text evidence="3">Belongs to the YAF9 family.</text>
</comment>